<reference key="1">
    <citation type="journal article" date="2011" name="J. Bacteriol.">
        <title>Comparative genomics of 28 Salmonella enterica isolates: evidence for CRISPR-mediated adaptive sublineage evolution.</title>
        <authorList>
            <person name="Fricke W.F."/>
            <person name="Mammel M.K."/>
            <person name="McDermott P.F."/>
            <person name="Tartera C."/>
            <person name="White D.G."/>
            <person name="Leclerc J.E."/>
            <person name="Ravel J."/>
            <person name="Cebula T.A."/>
        </authorList>
    </citation>
    <scope>NUCLEOTIDE SEQUENCE [LARGE SCALE GENOMIC DNA]</scope>
    <source>
        <strain>SL254</strain>
    </source>
</reference>
<name>CLPX_SALNS</name>
<gene>
    <name evidence="1" type="primary">clpX</name>
    <name type="ordered locus">SNSL254_A0498</name>
</gene>
<dbReference type="EMBL" id="CP001113">
    <property type="protein sequence ID" value="ACF64520.1"/>
    <property type="molecule type" value="Genomic_DNA"/>
</dbReference>
<dbReference type="RefSeq" id="WP_000130314.1">
    <property type="nucleotide sequence ID" value="NZ_CCMR01000003.1"/>
</dbReference>
<dbReference type="SMR" id="B4SWU2"/>
<dbReference type="KEGG" id="see:SNSL254_A0498"/>
<dbReference type="HOGENOM" id="CLU_014218_8_2_6"/>
<dbReference type="Proteomes" id="UP000008824">
    <property type="component" value="Chromosome"/>
</dbReference>
<dbReference type="GO" id="GO:0009376">
    <property type="term" value="C:HslUV protease complex"/>
    <property type="evidence" value="ECO:0007669"/>
    <property type="project" value="TreeGrafter"/>
</dbReference>
<dbReference type="GO" id="GO:0005524">
    <property type="term" value="F:ATP binding"/>
    <property type="evidence" value="ECO:0007669"/>
    <property type="project" value="UniProtKB-UniRule"/>
</dbReference>
<dbReference type="GO" id="GO:0016887">
    <property type="term" value="F:ATP hydrolysis activity"/>
    <property type="evidence" value="ECO:0007669"/>
    <property type="project" value="InterPro"/>
</dbReference>
<dbReference type="GO" id="GO:0140662">
    <property type="term" value="F:ATP-dependent protein folding chaperone"/>
    <property type="evidence" value="ECO:0007669"/>
    <property type="project" value="InterPro"/>
</dbReference>
<dbReference type="GO" id="GO:0046983">
    <property type="term" value="F:protein dimerization activity"/>
    <property type="evidence" value="ECO:0007669"/>
    <property type="project" value="InterPro"/>
</dbReference>
<dbReference type="GO" id="GO:0051082">
    <property type="term" value="F:unfolded protein binding"/>
    <property type="evidence" value="ECO:0007669"/>
    <property type="project" value="UniProtKB-UniRule"/>
</dbReference>
<dbReference type="GO" id="GO:0008270">
    <property type="term" value="F:zinc ion binding"/>
    <property type="evidence" value="ECO:0007669"/>
    <property type="project" value="InterPro"/>
</dbReference>
<dbReference type="GO" id="GO:0051301">
    <property type="term" value="P:cell division"/>
    <property type="evidence" value="ECO:0007669"/>
    <property type="project" value="TreeGrafter"/>
</dbReference>
<dbReference type="GO" id="GO:0051603">
    <property type="term" value="P:proteolysis involved in protein catabolic process"/>
    <property type="evidence" value="ECO:0007669"/>
    <property type="project" value="TreeGrafter"/>
</dbReference>
<dbReference type="CDD" id="cd19497">
    <property type="entry name" value="RecA-like_ClpX"/>
    <property type="match status" value="1"/>
</dbReference>
<dbReference type="FunFam" id="1.10.8.60:FF:000002">
    <property type="entry name" value="ATP-dependent Clp protease ATP-binding subunit ClpX"/>
    <property type="match status" value="1"/>
</dbReference>
<dbReference type="FunFam" id="3.40.50.300:FF:000005">
    <property type="entry name" value="ATP-dependent Clp protease ATP-binding subunit ClpX"/>
    <property type="match status" value="1"/>
</dbReference>
<dbReference type="Gene3D" id="1.10.8.60">
    <property type="match status" value="1"/>
</dbReference>
<dbReference type="Gene3D" id="6.20.220.10">
    <property type="entry name" value="ClpX chaperone, C4-type zinc finger domain"/>
    <property type="match status" value="1"/>
</dbReference>
<dbReference type="Gene3D" id="3.40.50.300">
    <property type="entry name" value="P-loop containing nucleotide triphosphate hydrolases"/>
    <property type="match status" value="1"/>
</dbReference>
<dbReference type="HAMAP" id="MF_00175">
    <property type="entry name" value="ClpX"/>
    <property type="match status" value="1"/>
</dbReference>
<dbReference type="InterPro" id="IPR003593">
    <property type="entry name" value="AAA+_ATPase"/>
</dbReference>
<dbReference type="InterPro" id="IPR050052">
    <property type="entry name" value="ATP-dep_Clp_protease_ClpX"/>
</dbReference>
<dbReference type="InterPro" id="IPR003959">
    <property type="entry name" value="ATPase_AAA_core"/>
</dbReference>
<dbReference type="InterPro" id="IPR019489">
    <property type="entry name" value="Clp_ATPase_C"/>
</dbReference>
<dbReference type="InterPro" id="IPR004487">
    <property type="entry name" value="Clp_protease_ATP-bd_su_ClpX"/>
</dbReference>
<dbReference type="InterPro" id="IPR046425">
    <property type="entry name" value="ClpX_bact"/>
</dbReference>
<dbReference type="InterPro" id="IPR027417">
    <property type="entry name" value="P-loop_NTPase"/>
</dbReference>
<dbReference type="InterPro" id="IPR010603">
    <property type="entry name" value="Znf_CppX_C4"/>
</dbReference>
<dbReference type="InterPro" id="IPR038366">
    <property type="entry name" value="Znf_CppX_C4_sf"/>
</dbReference>
<dbReference type="NCBIfam" id="TIGR00382">
    <property type="entry name" value="clpX"/>
    <property type="match status" value="1"/>
</dbReference>
<dbReference type="NCBIfam" id="NF003745">
    <property type="entry name" value="PRK05342.1"/>
    <property type="match status" value="1"/>
</dbReference>
<dbReference type="PANTHER" id="PTHR48102:SF7">
    <property type="entry name" value="ATP-DEPENDENT CLP PROTEASE ATP-BINDING SUBUNIT CLPX-LIKE, MITOCHONDRIAL"/>
    <property type="match status" value="1"/>
</dbReference>
<dbReference type="PANTHER" id="PTHR48102">
    <property type="entry name" value="ATP-DEPENDENT CLP PROTEASE ATP-BINDING SUBUNIT CLPX-LIKE, MITOCHONDRIAL-RELATED"/>
    <property type="match status" value="1"/>
</dbReference>
<dbReference type="Pfam" id="PF07724">
    <property type="entry name" value="AAA_2"/>
    <property type="match status" value="1"/>
</dbReference>
<dbReference type="Pfam" id="PF10431">
    <property type="entry name" value="ClpB_D2-small"/>
    <property type="match status" value="1"/>
</dbReference>
<dbReference type="Pfam" id="PF06689">
    <property type="entry name" value="zf-C4_ClpX"/>
    <property type="match status" value="1"/>
</dbReference>
<dbReference type="SMART" id="SM00382">
    <property type="entry name" value="AAA"/>
    <property type="match status" value="1"/>
</dbReference>
<dbReference type="SMART" id="SM01086">
    <property type="entry name" value="ClpB_D2-small"/>
    <property type="match status" value="1"/>
</dbReference>
<dbReference type="SMART" id="SM00994">
    <property type="entry name" value="zf-C4_ClpX"/>
    <property type="match status" value="1"/>
</dbReference>
<dbReference type="SUPFAM" id="SSF57716">
    <property type="entry name" value="Glucocorticoid receptor-like (DNA-binding domain)"/>
    <property type="match status" value="1"/>
</dbReference>
<dbReference type="SUPFAM" id="SSF52540">
    <property type="entry name" value="P-loop containing nucleoside triphosphate hydrolases"/>
    <property type="match status" value="1"/>
</dbReference>
<dbReference type="PROSITE" id="PS51902">
    <property type="entry name" value="CLPX_ZB"/>
    <property type="match status" value="1"/>
</dbReference>
<sequence>MTDKRKDGSGKLLYCSFCGKSQHEVRKLIAGPSVYICDECVDLCNDIIREEIKEVAPHRERSALPTPHEIRTHLDDYVIGQEQAKKVLAVAVYNHYKRLRNGDTSNGVELGKSNILLIGPTGSGKTLLAETLARLLDVPFTMADATTLTEAGYVGEDVENIIQKLLQKCDYDVQKAQRGIVYIDEIDKISRKSDNPSITRDVSGEGVQQALLKLIEGTVAAVPPQGGRKHPQQEFLQVDTSKILFICGGAFAGLDKVIANRVETGSGIGFGATVKAKSDKASEGELLSQVEPEDLIKFGLIPEFIGRLPVVATLNELSEEALIQILKEPKNALTKQYQALFNLEGVDLEFRDEALDAIARKAMARKTGARGLRSIVEAALLDTMYDLPSMEDVEKVVIDESVIAGQSKPLLIYGKPEAQASGE</sequence>
<organism>
    <name type="scientific">Salmonella newport (strain SL254)</name>
    <dbReference type="NCBI Taxonomy" id="423368"/>
    <lineage>
        <taxon>Bacteria</taxon>
        <taxon>Pseudomonadati</taxon>
        <taxon>Pseudomonadota</taxon>
        <taxon>Gammaproteobacteria</taxon>
        <taxon>Enterobacterales</taxon>
        <taxon>Enterobacteriaceae</taxon>
        <taxon>Salmonella</taxon>
    </lineage>
</organism>
<protein>
    <recommendedName>
        <fullName evidence="1">ATP-dependent Clp protease ATP-binding subunit ClpX</fullName>
    </recommendedName>
</protein>
<accession>B4SWU2</accession>
<feature type="chain" id="PRO_1000097998" description="ATP-dependent Clp protease ATP-binding subunit ClpX">
    <location>
        <begin position="1"/>
        <end position="423"/>
    </location>
</feature>
<feature type="domain" description="ClpX-type ZB" evidence="2">
    <location>
        <begin position="2"/>
        <end position="56"/>
    </location>
</feature>
<feature type="binding site" evidence="2">
    <location>
        <position position="15"/>
    </location>
    <ligand>
        <name>Zn(2+)</name>
        <dbReference type="ChEBI" id="CHEBI:29105"/>
    </ligand>
</feature>
<feature type="binding site" evidence="2">
    <location>
        <position position="18"/>
    </location>
    <ligand>
        <name>Zn(2+)</name>
        <dbReference type="ChEBI" id="CHEBI:29105"/>
    </ligand>
</feature>
<feature type="binding site" evidence="2">
    <location>
        <position position="37"/>
    </location>
    <ligand>
        <name>Zn(2+)</name>
        <dbReference type="ChEBI" id="CHEBI:29105"/>
    </ligand>
</feature>
<feature type="binding site" evidence="2">
    <location>
        <position position="40"/>
    </location>
    <ligand>
        <name>Zn(2+)</name>
        <dbReference type="ChEBI" id="CHEBI:29105"/>
    </ligand>
</feature>
<feature type="binding site" evidence="1">
    <location>
        <begin position="120"/>
        <end position="127"/>
    </location>
    <ligand>
        <name>ATP</name>
        <dbReference type="ChEBI" id="CHEBI:30616"/>
    </ligand>
</feature>
<proteinExistence type="inferred from homology"/>
<evidence type="ECO:0000255" key="1">
    <source>
        <dbReference type="HAMAP-Rule" id="MF_00175"/>
    </source>
</evidence>
<evidence type="ECO:0000255" key="2">
    <source>
        <dbReference type="PROSITE-ProRule" id="PRU01250"/>
    </source>
</evidence>
<keyword id="KW-0067">ATP-binding</keyword>
<keyword id="KW-0143">Chaperone</keyword>
<keyword id="KW-0479">Metal-binding</keyword>
<keyword id="KW-0547">Nucleotide-binding</keyword>
<keyword id="KW-0862">Zinc</keyword>
<comment type="function">
    <text evidence="1">ATP-dependent specificity component of the Clp protease. It directs the protease to specific substrates. Can perform chaperone functions in the absence of ClpP.</text>
</comment>
<comment type="subunit">
    <text evidence="1">Component of the ClpX-ClpP complex. Forms a hexameric ring that, in the presence of ATP, binds to fourteen ClpP subunits assembled into a disk-like structure with a central cavity, resembling the structure of eukaryotic proteasomes.</text>
</comment>
<comment type="similarity">
    <text evidence="1">Belongs to the ClpX chaperone family.</text>
</comment>